<comment type="catalytic activity">
    <reaction>
        <text>Cleavage of hydrophobic, N-terminal signal or leader sequences from secreted and periplasmic proteins.</text>
        <dbReference type="EC" id="3.4.21.89"/>
    </reaction>
</comment>
<comment type="subcellular location">
    <subcellularLocation>
        <location evidence="3">Cell membrane</location>
        <topology evidence="3">Single-pass type II membrane protein</topology>
    </subcellularLocation>
</comment>
<comment type="similarity">
    <text evidence="3">Belongs to the peptidase S26 family.</text>
</comment>
<proteinExistence type="inferred from homology"/>
<keyword id="KW-1003">Cell membrane</keyword>
<keyword id="KW-0378">Hydrolase</keyword>
<keyword id="KW-0472">Membrane</keyword>
<keyword id="KW-0645">Protease</keyword>
<keyword id="KW-1185">Reference proteome</keyword>
<keyword id="KW-0812">Transmembrane</keyword>
<keyword id="KW-1133">Transmembrane helix</keyword>
<name>LEP1_SYNY3</name>
<reference key="1">
    <citation type="journal article" date="1996" name="DNA Res.">
        <title>Sequence analysis of the genome of the unicellular cyanobacterium Synechocystis sp. strain PCC6803. II. Sequence determination of the entire genome and assignment of potential protein-coding regions.</title>
        <authorList>
            <person name="Kaneko T."/>
            <person name="Sato S."/>
            <person name="Kotani H."/>
            <person name="Tanaka A."/>
            <person name="Asamizu E."/>
            <person name="Nakamura Y."/>
            <person name="Miyajima N."/>
            <person name="Hirosawa M."/>
            <person name="Sugiura M."/>
            <person name="Sasamoto S."/>
            <person name="Kimura T."/>
            <person name="Hosouchi T."/>
            <person name="Matsuno A."/>
            <person name="Muraki A."/>
            <person name="Nakazaki N."/>
            <person name="Naruo K."/>
            <person name="Okumura S."/>
            <person name="Shimpo S."/>
            <person name="Takeuchi C."/>
            <person name="Wada T."/>
            <person name="Watanabe A."/>
            <person name="Yamada M."/>
            <person name="Yasuda M."/>
            <person name="Tabata S."/>
        </authorList>
    </citation>
    <scope>NUCLEOTIDE SEQUENCE [LARGE SCALE GENOMIC DNA]</scope>
    <source>
        <strain>ATCC 27184 / PCC 6803 / Kazusa</strain>
    </source>
</reference>
<feature type="chain" id="PRO_0000109535" description="Probable signal peptidase I-1">
    <location>
        <begin position="1"/>
        <end position="196"/>
    </location>
</feature>
<feature type="topological domain" description="Cytoplasmic" evidence="2">
    <location>
        <begin position="1"/>
        <end position="16"/>
    </location>
</feature>
<feature type="transmembrane region" description="Helical" evidence="2">
    <location>
        <begin position="17"/>
        <end position="35"/>
    </location>
</feature>
<feature type="topological domain" description="Periplasmic" evidence="2">
    <location>
        <begin position="36"/>
        <end position="196"/>
    </location>
</feature>
<feature type="active site" evidence="1">
    <location>
        <position position="44"/>
    </location>
</feature>
<feature type="active site" evidence="1">
    <location>
        <position position="94"/>
    </location>
</feature>
<gene>
    <name type="primary">lepB1</name>
    <name type="ordered locus">sll0716</name>
</gene>
<sequence length="196" mass="22230">MQNSPIPSPWQFIKENIPLLMVALVLALLLRFFVAEPRYIPSDSMLPTLEQGDRLVVEKVSYHFHPPQVGDIIVFHPPELLQVQGYDLGQAFIKRVIALPGQTVEVNNGIVYRDGQPLQEEYILEPPQYNLPAVRVPDGQVFVMGDNRNNSNDSHVWGFLPQQNIIGHALFRFFPASRWGQLGSFTFVPARTIINT</sequence>
<dbReference type="EC" id="3.4.21.89"/>
<dbReference type="EMBL" id="BA000022">
    <property type="protein sequence ID" value="BAA16662.1"/>
    <property type="molecule type" value="Genomic_DNA"/>
</dbReference>
<dbReference type="PIR" id="S74510">
    <property type="entry name" value="S74510"/>
</dbReference>
<dbReference type="SMR" id="P72660"/>
<dbReference type="FunCoup" id="P72660">
    <property type="interactions" value="406"/>
</dbReference>
<dbReference type="IntAct" id="P72660">
    <property type="interactions" value="3"/>
</dbReference>
<dbReference type="STRING" id="1148.gene:10497517"/>
<dbReference type="MEROPS" id="S26.008"/>
<dbReference type="PaxDb" id="1148-1651734"/>
<dbReference type="EnsemblBacteria" id="BAA16662">
    <property type="protein sequence ID" value="BAA16662"/>
    <property type="gene ID" value="BAA16662"/>
</dbReference>
<dbReference type="KEGG" id="syn:sll0716"/>
<dbReference type="eggNOG" id="COG0681">
    <property type="taxonomic scope" value="Bacteria"/>
</dbReference>
<dbReference type="InParanoid" id="P72660"/>
<dbReference type="PhylomeDB" id="P72660"/>
<dbReference type="Proteomes" id="UP000001425">
    <property type="component" value="Chromosome"/>
</dbReference>
<dbReference type="GO" id="GO:0005886">
    <property type="term" value="C:plasma membrane"/>
    <property type="evidence" value="ECO:0007669"/>
    <property type="project" value="UniProtKB-SubCell"/>
</dbReference>
<dbReference type="GO" id="GO:0004252">
    <property type="term" value="F:serine-type endopeptidase activity"/>
    <property type="evidence" value="ECO:0000318"/>
    <property type="project" value="GO_Central"/>
</dbReference>
<dbReference type="GO" id="GO:0006465">
    <property type="term" value="P:signal peptide processing"/>
    <property type="evidence" value="ECO:0000318"/>
    <property type="project" value="GO_Central"/>
</dbReference>
<dbReference type="CDD" id="cd06530">
    <property type="entry name" value="S26_SPase_I"/>
    <property type="match status" value="1"/>
</dbReference>
<dbReference type="Gene3D" id="2.10.109.10">
    <property type="entry name" value="Umud Fragment, subunit A"/>
    <property type="match status" value="1"/>
</dbReference>
<dbReference type="InterPro" id="IPR036286">
    <property type="entry name" value="LexA/Signal_pep-like_sf"/>
</dbReference>
<dbReference type="InterPro" id="IPR000223">
    <property type="entry name" value="Pept_S26A_signal_pept_1"/>
</dbReference>
<dbReference type="InterPro" id="IPR019758">
    <property type="entry name" value="Pept_S26A_signal_pept_1_CS"/>
</dbReference>
<dbReference type="InterPro" id="IPR019757">
    <property type="entry name" value="Pept_S26A_signal_pept_1_Lys-AS"/>
</dbReference>
<dbReference type="InterPro" id="IPR019756">
    <property type="entry name" value="Pept_S26A_signal_pept_1_Ser-AS"/>
</dbReference>
<dbReference type="InterPro" id="IPR019533">
    <property type="entry name" value="Peptidase_S26"/>
</dbReference>
<dbReference type="NCBIfam" id="TIGR02227">
    <property type="entry name" value="sigpep_I_bact"/>
    <property type="match status" value="1"/>
</dbReference>
<dbReference type="PANTHER" id="PTHR43390:SF1">
    <property type="entry name" value="CHLOROPLAST PROCESSING PEPTIDASE"/>
    <property type="match status" value="1"/>
</dbReference>
<dbReference type="PANTHER" id="PTHR43390">
    <property type="entry name" value="SIGNAL PEPTIDASE I"/>
    <property type="match status" value="1"/>
</dbReference>
<dbReference type="Pfam" id="PF10502">
    <property type="entry name" value="Peptidase_S26"/>
    <property type="match status" value="1"/>
</dbReference>
<dbReference type="PRINTS" id="PR00727">
    <property type="entry name" value="LEADERPTASE"/>
</dbReference>
<dbReference type="SUPFAM" id="SSF51306">
    <property type="entry name" value="LexA/Signal peptidase"/>
    <property type="match status" value="1"/>
</dbReference>
<dbReference type="PROSITE" id="PS00501">
    <property type="entry name" value="SPASE_I_1"/>
    <property type="match status" value="1"/>
</dbReference>
<dbReference type="PROSITE" id="PS00760">
    <property type="entry name" value="SPASE_I_2"/>
    <property type="match status" value="1"/>
</dbReference>
<dbReference type="PROSITE" id="PS00761">
    <property type="entry name" value="SPASE_I_3"/>
    <property type="match status" value="1"/>
</dbReference>
<evidence type="ECO:0000250" key="1"/>
<evidence type="ECO:0000255" key="2"/>
<evidence type="ECO:0000305" key="3"/>
<protein>
    <recommendedName>
        <fullName>Probable signal peptidase I-1</fullName>
        <shortName>SPase I-1</shortName>
        <ecNumber>3.4.21.89</ecNumber>
    </recommendedName>
    <alternativeName>
        <fullName>Leader peptidase I-1</fullName>
    </alternativeName>
</protein>
<accession>P72660</accession>
<organism>
    <name type="scientific">Synechocystis sp. (strain ATCC 27184 / PCC 6803 / Kazusa)</name>
    <dbReference type="NCBI Taxonomy" id="1111708"/>
    <lineage>
        <taxon>Bacteria</taxon>
        <taxon>Bacillati</taxon>
        <taxon>Cyanobacteriota</taxon>
        <taxon>Cyanophyceae</taxon>
        <taxon>Synechococcales</taxon>
        <taxon>Merismopediaceae</taxon>
        <taxon>Synechocystis</taxon>
    </lineage>
</organism>